<protein>
    <recommendedName>
        <fullName evidence="2">Elongation factor Tu</fullName>
        <shortName evidence="2">EF-Tu</shortName>
        <ecNumber evidence="2">3.6.5.3</ecNumber>
    </recommendedName>
</protein>
<proteinExistence type="inferred from homology"/>
<sequence>MAKSKFERNKPHVNIGTIGHVDHGKTSLTAAITKYFGEFKAYDQIDAAPEEKARGITISTAHVEYETPNRHYAHVDCPGHADYVKNMITGAAQMDGAILVVSAADGPMPQTREHILLARQVGVPAIVVFLNKVDQVDDAELLELVELEVRELLSSYEFPGDDIPIVKGSALAALEDSDKKIGEDAIRELMAAVDAYIPTPERPIDQPFLMPIEDVFSISGRGTVVTGRVERGIVKVGEEIEIVGIRPTTKTTCTGVEMFRKLLDQGQAGDNIGALLRGVDRNGVERGQILCKPGSVKPHRKFKAEAYILTKEEGGRHTPFFTNYRPQFYFRTTDVTGIVTLPEGTEMVMPGDNVTVDVELIVPIAMEEKLRFAIREGGRTVGAGIVASIVE</sequence>
<comment type="function">
    <text evidence="2">GTP hydrolase that promotes the GTP-dependent binding of aminoacyl-tRNA to the A-site of ribosomes during protein biosynthesis.</text>
</comment>
<comment type="catalytic activity">
    <reaction evidence="2">
        <text>GTP + H2O = GDP + phosphate + H(+)</text>
        <dbReference type="Rhea" id="RHEA:19669"/>
        <dbReference type="ChEBI" id="CHEBI:15377"/>
        <dbReference type="ChEBI" id="CHEBI:15378"/>
        <dbReference type="ChEBI" id="CHEBI:37565"/>
        <dbReference type="ChEBI" id="CHEBI:43474"/>
        <dbReference type="ChEBI" id="CHEBI:58189"/>
        <dbReference type="EC" id="3.6.5.3"/>
    </reaction>
    <physiologicalReaction direction="left-to-right" evidence="2">
        <dbReference type="Rhea" id="RHEA:19670"/>
    </physiologicalReaction>
</comment>
<comment type="subunit">
    <text evidence="2">Monomer.</text>
</comment>
<comment type="subcellular location">
    <subcellularLocation>
        <location evidence="2">Cytoplasm</location>
    </subcellularLocation>
</comment>
<comment type="similarity">
    <text evidence="2">Belongs to the TRAFAC class translation factor GTPase superfamily. Classic translation factor GTPase family. EF-Tu/EF-1A subfamily.</text>
</comment>
<reference key="1">
    <citation type="submission" date="2007-06" db="EMBL/GenBank/DDBJ databases">
        <title>Complete sequence of Sinorhizobium medicae WSM419 chromosome.</title>
        <authorList>
            <consortium name="US DOE Joint Genome Institute"/>
            <person name="Copeland A."/>
            <person name="Lucas S."/>
            <person name="Lapidus A."/>
            <person name="Barry K."/>
            <person name="Glavina del Rio T."/>
            <person name="Dalin E."/>
            <person name="Tice H."/>
            <person name="Pitluck S."/>
            <person name="Chain P."/>
            <person name="Malfatti S."/>
            <person name="Shin M."/>
            <person name="Vergez L."/>
            <person name="Schmutz J."/>
            <person name="Larimer F."/>
            <person name="Land M."/>
            <person name="Hauser L."/>
            <person name="Kyrpides N."/>
            <person name="Mikhailova N."/>
            <person name="Reeve W.G."/>
            <person name="Richardson P."/>
        </authorList>
    </citation>
    <scope>NUCLEOTIDE SEQUENCE [LARGE SCALE GENOMIC DNA]</scope>
    <source>
        <strain>WSM419</strain>
    </source>
</reference>
<name>EFTU_SINMW</name>
<evidence type="ECO:0000250" key="1"/>
<evidence type="ECO:0000255" key="2">
    <source>
        <dbReference type="HAMAP-Rule" id="MF_00118"/>
    </source>
</evidence>
<accession>A6U842</accession>
<dbReference type="EC" id="3.6.5.3" evidence="2"/>
<dbReference type="EMBL" id="CP000738">
    <property type="protein sequence ID" value="ABR59822.1"/>
    <property type="molecule type" value="Genomic_DNA"/>
</dbReference>
<dbReference type="EMBL" id="CP000738">
    <property type="protein sequence ID" value="ABR59837.1"/>
    <property type="molecule type" value="Genomic_DNA"/>
</dbReference>
<dbReference type="RefSeq" id="YP_001326657.1">
    <property type="nucleotide sequence ID" value="NC_009636.1"/>
</dbReference>
<dbReference type="RefSeq" id="YP_001326672.1">
    <property type="nucleotide sequence ID" value="NC_009636.1"/>
</dbReference>
<dbReference type="SMR" id="A6U842"/>
<dbReference type="STRING" id="366394.Smed_0969"/>
<dbReference type="KEGG" id="smd:Smed_0969"/>
<dbReference type="KEGG" id="smd:Smed_0984"/>
<dbReference type="PATRIC" id="fig|366394.8.peg.4086"/>
<dbReference type="eggNOG" id="COG0050">
    <property type="taxonomic scope" value="Bacteria"/>
</dbReference>
<dbReference type="HOGENOM" id="CLU_007265_0_0_5"/>
<dbReference type="OrthoDB" id="9803139at2"/>
<dbReference type="Proteomes" id="UP000001108">
    <property type="component" value="Chromosome"/>
</dbReference>
<dbReference type="GO" id="GO:0005829">
    <property type="term" value="C:cytosol"/>
    <property type="evidence" value="ECO:0007669"/>
    <property type="project" value="TreeGrafter"/>
</dbReference>
<dbReference type="GO" id="GO:0005525">
    <property type="term" value="F:GTP binding"/>
    <property type="evidence" value="ECO:0007669"/>
    <property type="project" value="UniProtKB-UniRule"/>
</dbReference>
<dbReference type="GO" id="GO:0003924">
    <property type="term" value="F:GTPase activity"/>
    <property type="evidence" value="ECO:0007669"/>
    <property type="project" value="InterPro"/>
</dbReference>
<dbReference type="GO" id="GO:0097216">
    <property type="term" value="F:guanosine tetraphosphate binding"/>
    <property type="evidence" value="ECO:0007669"/>
    <property type="project" value="UniProtKB-ARBA"/>
</dbReference>
<dbReference type="GO" id="GO:0003746">
    <property type="term" value="F:translation elongation factor activity"/>
    <property type="evidence" value="ECO:0007669"/>
    <property type="project" value="UniProtKB-UniRule"/>
</dbReference>
<dbReference type="CDD" id="cd01884">
    <property type="entry name" value="EF_Tu"/>
    <property type="match status" value="1"/>
</dbReference>
<dbReference type="CDD" id="cd03697">
    <property type="entry name" value="EFTU_II"/>
    <property type="match status" value="1"/>
</dbReference>
<dbReference type="CDD" id="cd03707">
    <property type="entry name" value="EFTU_III"/>
    <property type="match status" value="1"/>
</dbReference>
<dbReference type="FunFam" id="2.40.30.10:FF:000001">
    <property type="entry name" value="Elongation factor Tu"/>
    <property type="match status" value="1"/>
</dbReference>
<dbReference type="FunFam" id="3.40.50.300:FF:000003">
    <property type="entry name" value="Elongation factor Tu"/>
    <property type="match status" value="1"/>
</dbReference>
<dbReference type="Gene3D" id="3.40.50.300">
    <property type="entry name" value="P-loop containing nucleotide triphosphate hydrolases"/>
    <property type="match status" value="1"/>
</dbReference>
<dbReference type="Gene3D" id="2.40.30.10">
    <property type="entry name" value="Translation factors"/>
    <property type="match status" value="2"/>
</dbReference>
<dbReference type="HAMAP" id="MF_00118_B">
    <property type="entry name" value="EF_Tu_B"/>
    <property type="match status" value="1"/>
</dbReference>
<dbReference type="InterPro" id="IPR041709">
    <property type="entry name" value="EF-Tu_GTP-bd"/>
</dbReference>
<dbReference type="InterPro" id="IPR050055">
    <property type="entry name" value="EF-Tu_GTPase"/>
</dbReference>
<dbReference type="InterPro" id="IPR004161">
    <property type="entry name" value="EFTu-like_2"/>
</dbReference>
<dbReference type="InterPro" id="IPR033720">
    <property type="entry name" value="EFTU_2"/>
</dbReference>
<dbReference type="InterPro" id="IPR031157">
    <property type="entry name" value="G_TR_CS"/>
</dbReference>
<dbReference type="InterPro" id="IPR027417">
    <property type="entry name" value="P-loop_NTPase"/>
</dbReference>
<dbReference type="InterPro" id="IPR005225">
    <property type="entry name" value="Small_GTP-bd"/>
</dbReference>
<dbReference type="InterPro" id="IPR000795">
    <property type="entry name" value="T_Tr_GTP-bd_dom"/>
</dbReference>
<dbReference type="InterPro" id="IPR009000">
    <property type="entry name" value="Transl_B-barrel_sf"/>
</dbReference>
<dbReference type="InterPro" id="IPR009001">
    <property type="entry name" value="Transl_elong_EF1A/Init_IF2_C"/>
</dbReference>
<dbReference type="InterPro" id="IPR004541">
    <property type="entry name" value="Transl_elong_EFTu/EF1A_bac/org"/>
</dbReference>
<dbReference type="InterPro" id="IPR004160">
    <property type="entry name" value="Transl_elong_EFTu/EF1A_C"/>
</dbReference>
<dbReference type="NCBIfam" id="TIGR00485">
    <property type="entry name" value="EF-Tu"/>
    <property type="match status" value="1"/>
</dbReference>
<dbReference type="NCBIfam" id="NF000766">
    <property type="entry name" value="PRK00049.1"/>
    <property type="match status" value="1"/>
</dbReference>
<dbReference type="NCBIfam" id="NF009372">
    <property type="entry name" value="PRK12735.1"/>
    <property type="match status" value="1"/>
</dbReference>
<dbReference type="NCBIfam" id="NF009373">
    <property type="entry name" value="PRK12736.1"/>
    <property type="match status" value="1"/>
</dbReference>
<dbReference type="NCBIfam" id="TIGR00231">
    <property type="entry name" value="small_GTP"/>
    <property type="match status" value="1"/>
</dbReference>
<dbReference type="PANTHER" id="PTHR43721:SF22">
    <property type="entry name" value="ELONGATION FACTOR TU, MITOCHONDRIAL"/>
    <property type="match status" value="1"/>
</dbReference>
<dbReference type="PANTHER" id="PTHR43721">
    <property type="entry name" value="ELONGATION FACTOR TU-RELATED"/>
    <property type="match status" value="1"/>
</dbReference>
<dbReference type="Pfam" id="PF00009">
    <property type="entry name" value="GTP_EFTU"/>
    <property type="match status" value="1"/>
</dbReference>
<dbReference type="Pfam" id="PF03144">
    <property type="entry name" value="GTP_EFTU_D2"/>
    <property type="match status" value="1"/>
</dbReference>
<dbReference type="Pfam" id="PF03143">
    <property type="entry name" value="GTP_EFTU_D3"/>
    <property type="match status" value="1"/>
</dbReference>
<dbReference type="PRINTS" id="PR00315">
    <property type="entry name" value="ELONGATNFCT"/>
</dbReference>
<dbReference type="SUPFAM" id="SSF50465">
    <property type="entry name" value="EF-Tu/eEF-1alpha/eIF2-gamma C-terminal domain"/>
    <property type="match status" value="1"/>
</dbReference>
<dbReference type="SUPFAM" id="SSF52540">
    <property type="entry name" value="P-loop containing nucleoside triphosphate hydrolases"/>
    <property type="match status" value="1"/>
</dbReference>
<dbReference type="SUPFAM" id="SSF50447">
    <property type="entry name" value="Translation proteins"/>
    <property type="match status" value="1"/>
</dbReference>
<dbReference type="PROSITE" id="PS00301">
    <property type="entry name" value="G_TR_1"/>
    <property type="match status" value="1"/>
</dbReference>
<dbReference type="PROSITE" id="PS51722">
    <property type="entry name" value="G_TR_2"/>
    <property type="match status" value="1"/>
</dbReference>
<organism>
    <name type="scientific">Sinorhizobium medicae (strain WSM419)</name>
    <name type="common">Ensifer medicae</name>
    <dbReference type="NCBI Taxonomy" id="366394"/>
    <lineage>
        <taxon>Bacteria</taxon>
        <taxon>Pseudomonadati</taxon>
        <taxon>Pseudomonadota</taxon>
        <taxon>Alphaproteobacteria</taxon>
        <taxon>Hyphomicrobiales</taxon>
        <taxon>Rhizobiaceae</taxon>
        <taxon>Sinorhizobium/Ensifer group</taxon>
        <taxon>Sinorhizobium</taxon>
    </lineage>
</organism>
<gene>
    <name evidence="2" type="primary">tuf1</name>
    <name type="ordered locus">Smed_0969</name>
</gene>
<gene>
    <name evidence="2" type="primary">tuf2</name>
    <name type="ordered locus">Smed_0984</name>
</gene>
<feature type="chain" id="PRO_0000337546" description="Elongation factor Tu">
    <location>
        <begin position="1"/>
        <end position="391"/>
    </location>
</feature>
<feature type="domain" description="tr-type G">
    <location>
        <begin position="10"/>
        <end position="201"/>
    </location>
</feature>
<feature type="region of interest" description="G1" evidence="1">
    <location>
        <begin position="19"/>
        <end position="26"/>
    </location>
</feature>
<feature type="region of interest" description="G2" evidence="1">
    <location>
        <begin position="55"/>
        <end position="59"/>
    </location>
</feature>
<feature type="region of interest" description="G3" evidence="1">
    <location>
        <begin position="76"/>
        <end position="79"/>
    </location>
</feature>
<feature type="region of interest" description="G4" evidence="1">
    <location>
        <begin position="131"/>
        <end position="134"/>
    </location>
</feature>
<feature type="region of interest" description="G5" evidence="1">
    <location>
        <begin position="169"/>
        <end position="171"/>
    </location>
</feature>
<feature type="binding site" evidence="2">
    <location>
        <begin position="19"/>
        <end position="26"/>
    </location>
    <ligand>
        <name>GTP</name>
        <dbReference type="ChEBI" id="CHEBI:37565"/>
    </ligand>
</feature>
<feature type="binding site" evidence="2">
    <location>
        <position position="26"/>
    </location>
    <ligand>
        <name>Mg(2+)</name>
        <dbReference type="ChEBI" id="CHEBI:18420"/>
    </ligand>
</feature>
<feature type="binding site" evidence="2">
    <location>
        <begin position="76"/>
        <end position="80"/>
    </location>
    <ligand>
        <name>GTP</name>
        <dbReference type="ChEBI" id="CHEBI:37565"/>
    </ligand>
</feature>
<feature type="binding site" evidence="2">
    <location>
        <begin position="131"/>
        <end position="134"/>
    </location>
    <ligand>
        <name>GTP</name>
        <dbReference type="ChEBI" id="CHEBI:37565"/>
    </ligand>
</feature>
<keyword id="KW-0963">Cytoplasm</keyword>
<keyword id="KW-0251">Elongation factor</keyword>
<keyword id="KW-0342">GTP-binding</keyword>
<keyword id="KW-0378">Hydrolase</keyword>
<keyword id="KW-0460">Magnesium</keyword>
<keyword id="KW-0479">Metal-binding</keyword>
<keyword id="KW-0547">Nucleotide-binding</keyword>
<keyword id="KW-0648">Protein biosynthesis</keyword>